<name>EPOR_CANLF</name>
<sequence>MNHLWTHLWPGVGSLCLLLAGAAWASLPKPLDPKFESKAALLAARAPEELLCFTERLEDLVCFWEEAASAGVGPDNYSFFYQLEGEPWKTCSLHQAPTTRGAVRFWCSLPTADTSSFVPLELRATAVSSGALLYRRIIHINEVVLLDPPAGLLARRADEGGHVVLRWLPPPGAPVASLIRYEVNISGSVAGGSQKVEILDGRTECVLSNLRGGTRYTFMVRARMAEPSFGGFWSAWSEPASLLTASDLDPLILTLSLILVLILLLLAVLALLSHRRTLKQKIWPGIPSPESEFEGLFTTHKGNFQLWLYQNEGCLWWSPCTPLAEDPPAPLEVLSERCWGAPQAVEPGADDEGPLLEPVGSEHSQDTYLVLDKWLLPRNPSSEDVSQSGGSLDIVAMDKGSEASSCSSGLSLKPGPEGALGASFEYTILDPSSQLLCPRALPPELPPTPPHIKYLYLMVSDSGISTDYSSGGSQGAQGDSLNSPFLNPYENSLIPAPEPSPPGYVACS</sequence>
<keyword id="KW-1003">Cell membrane</keyword>
<keyword id="KW-1015">Disulfide bond</keyword>
<keyword id="KW-0325">Glycoprotein</keyword>
<keyword id="KW-1017">Isopeptide bond</keyword>
<keyword id="KW-0472">Membrane</keyword>
<keyword id="KW-0597">Phosphoprotein</keyword>
<keyword id="KW-0675">Receptor</keyword>
<keyword id="KW-1185">Reference proteome</keyword>
<keyword id="KW-0732">Signal</keyword>
<keyword id="KW-0812">Transmembrane</keyword>
<keyword id="KW-1133">Transmembrane helix</keyword>
<keyword id="KW-0832">Ubl conjugation</keyword>
<gene>
    <name type="primary">EPOR</name>
</gene>
<reference key="1">
    <citation type="submission" date="2005-01" db="EMBL/GenBank/DDBJ databases">
        <title>Transcriptional regulation of EPO-R during lung growth.</title>
        <authorList>
            <person name="Zhang Q."/>
            <person name="Moe O.W."/>
            <person name="Hsia C.C.W."/>
        </authorList>
    </citation>
    <scope>NUCLEOTIDE SEQUENCE [MRNA]</scope>
</reference>
<organism>
    <name type="scientific">Canis lupus familiaris</name>
    <name type="common">Dog</name>
    <name type="synonym">Canis familiaris</name>
    <dbReference type="NCBI Taxonomy" id="9615"/>
    <lineage>
        <taxon>Eukaryota</taxon>
        <taxon>Metazoa</taxon>
        <taxon>Chordata</taxon>
        <taxon>Craniata</taxon>
        <taxon>Vertebrata</taxon>
        <taxon>Euteleostomi</taxon>
        <taxon>Mammalia</taxon>
        <taxon>Eutheria</taxon>
        <taxon>Laurasiatheria</taxon>
        <taxon>Carnivora</taxon>
        <taxon>Caniformia</taxon>
        <taxon>Canidae</taxon>
        <taxon>Canis</taxon>
    </lineage>
</organism>
<protein>
    <recommendedName>
        <fullName>Erythropoietin receptor</fullName>
        <shortName evidence="7">EPO-R</shortName>
    </recommendedName>
</protein>
<accession>Q2KL21</accession>
<feature type="signal peptide" evidence="4">
    <location>
        <begin position="1"/>
        <end position="24"/>
    </location>
</feature>
<feature type="chain" id="PRO_0000231014" description="Erythropoietin receptor">
    <location>
        <begin position="25"/>
        <end position="508"/>
    </location>
</feature>
<feature type="topological domain" description="Extracellular" evidence="4">
    <location>
        <begin position="25"/>
        <end position="250"/>
    </location>
</feature>
<feature type="transmembrane region" description="Helical" evidence="4">
    <location>
        <begin position="251"/>
        <end position="273"/>
    </location>
</feature>
<feature type="topological domain" description="Cytoplasmic" evidence="4">
    <location>
        <begin position="274"/>
        <end position="508"/>
    </location>
</feature>
<feature type="domain" description="Fibronectin type-III" evidence="5">
    <location>
        <begin position="148"/>
        <end position="247"/>
    </location>
</feature>
<feature type="region of interest" description="Disordered" evidence="6">
    <location>
        <begin position="467"/>
        <end position="508"/>
    </location>
</feature>
<feature type="short sequence motif" description="WSXWS motif" evidence="1">
    <location>
        <begin position="233"/>
        <end position="237"/>
    </location>
</feature>
<feature type="short sequence motif" description="Box 1 motif" evidence="2">
    <location>
        <begin position="282"/>
        <end position="290"/>
    </location>
</feature>
<feature type="short sequence motif" description="ITIM motif" evidence="1">
    <location>
        <begin position="452"/>
        <end position="457"/>
    </location>
</feature>
<feature type="site" description="Required for ligand binding" evidence="3">
    <location>
        <position position="117"/>
    </location>
</feature>
<feature type="modified residue" description="Phosphotyrosine; by JAK2" evidence="1">
    <location>
        <position position="368"/>
    </location>
</feature>
<feature type="modified residue" description="Phosphotyrosine; by JAK2" evidence="1">
    <location>
        <position position="426"/>
    </location>
</feature>
<feature type="modified residue" description="Phosphotyrosine; by JAK2" evidence="1">
    <location>
        <position position="454"/>
    </location>
</feature>
<feature type="modified residue" description="Phosphotyrosine; by JAK2" evidence="1">
    <location>
        <position position="456"/>
    </location>
</feature>
<feature type="modified residue" description="Phosphotyrosine; by JAK2" evidence="1">
    <location>
        <position position="468"/>
    </location>
</feature>
<feature type="modified residue" description="Phosphotyrosine; by JAK2" evidence="1">
    <location>
        <position position="489"/>
    </location>
</feature>
<feature type="modified residue" description="Phosphotyrosine; by JAK2" evidence="1">
    <location>
        <position position="504"/>
    </location>
</feature>
<feature type="glycosylation site" description="N-linked (GlcNAc...) asparagine" evidence="4">
    <location>
        <position position="76"/>
    </location>
</feature>
<feature type="glycosylation site" description="N-linked (GlcNAc...) asparagine" evidence="4">
    <location>
        <position position="184"/>
    </location>
</feature>
<feature type="disulfide bond" evidence="3">
    <location>
        <begin position="52"/>
        <end position="62"/>
    </location>
</feature>
<feature type="disulfide bond" evidence="3">
    <location>
        <begin position="91"/>
        <end position="107"/>
    </location>
</feature>
<feature type="cross-link" description="Glycyl lysine isopeptide (Lys-Gly) (interchain with G-Cter in ubiquitin)" evidence="1">
    <location>
        <position position="281"/>
    </location>
</feature>
<feature type="cross-link" description="Glycyl lysine isopeptide (Lys-Gly) (interchain with G-Cter in ubiquitin)" evidence="1">
    <location>
        <position position="453"/>
    </location>
</feature>
<comment type="function">
    <text evidence="1 3">Receptor for erythropoietin, which mediates erythropoietin-induced erythroblast proliferation and differentiation (By similarity). Upon EPO stimulation, EPOR dimerizes triggering the JAK2/STAT5 signaling cascade (By similarity). In some cell types, can also activate STAT1 and STAT3 (By similarity). May also activate the LYN tyrosine kinase (By similarity).</text>
</comment>
<comment type="function">
    <text evidence="3">Isoform EPOR-T acts as a dominant-negative receptor of EPOR-mediated signaling.</text>
</comment>
<comment type="subunit">
    <text evidence="1 3">Forms homodimers on EPO stimulation. The tyrosine-phosphorylated form interacts with several SH2 domain-containing proteins including LYN, the adapter protein SH2B2, PTPN6, PTPN11, JAK2, PI3 kinases, STAT5A/B, SOCS3, CRKL (By similarity). Interacts with INPP5D/SHIP1 (By similarity). SH2B2 binding inhibits the JAK-STAT signaling. Interacts with RHEX; this interaction occurs in a erythropoietin (EPO)-dependent manner. Interacts with ATXN2L (By similarity).</text>
</comment>
<comment type="subcellular location">
    <subcellularLocation>
        <location evidence="1">Cell membrane</location>
        <topology evidence="4">Single-pass type I membrane protein</topology>
    </subcellularLocation>
</comment>
<comment type="domain">
    <text evidence="3">The WSXWS motif appears to be necessary for proper protein folding and thereby efficient intracellular transport and cell-surface receptor binding.</text>
</comment>
<comment type="domain">
    <text evidence="2">The box 1 motif is required for JAK interaction and/or activation.</text>
</comment>
<comment type="domain">
    <text evidence="1">Contains 1 copy of a cytoplasmic motif that is referred to as the immunoreceptor tyrosine-based inhibitor motif (ITIM). This motif is involved in modulation of cellular responses. The phosphorylated ITIM motif can bind the SH2 domain of several SH2-containing phosphatases.</text>
</comment>
<comment type="PTM">
    <text evidence="1 3">On EPO stimulation, phosphorylated on C-terminal tyrosine residues by JAK2 (By similarity). The phosphotyrosine motifs are also recruitment sites for several SH2-containing proteins and adapter proteins which mediate cell proliferation (By similarity). Phosphorylation on Tyr-454 is required for PTPN6 interaction, Tyr-426 for PTPN11 (By similarity). Tyr-426 is also required for SOCS3 binding, but Tyr-454/Tyr-456 motif is the preferred binding site (By similarity).</text>
</comment>
<comment type="PTM">
    <text evidence="1 3">Ubiquitinated by the ECS(SOCS2) complex following ligand-binding and phosphorylation by JAK2, leading to its degradation by the proteasome (By similarity). Regulation by the ECS(SOCS2) complex acts as a negative feedback loop of erythropoietin-mediated signaling pathway (By similarity). Ubiquitination at Lys-281 mediates receptor internalization, whereas ubiquitination at Lys-453 promotes trafficking of activated receptors to the lysosomes for degradation (By similarity). Ubiquitinated by NOSIP; appears to be either multi-monoubiquitinated or polyubiquitinated (By similarity). Ubiquitination mediates proliferation and survival of EPO-dependent cells (By similarity).</text>
</comment>
<comment type="similarity">
    <text evidence="8">Belongs to the type I cytokine receptor family. Type 1 subfamily.</text>
</comment>
<dbReference type="EMBL" id="AY908987">
    <property type="protein sequence ID" value="AAX89035.1"/>
    <property type="molecule type" value="mRNA"/>
</dbReference>
<dbReference type="RefSeq" id="NP_001041576.1">
    <property type="nucleotide sequence ID" value="NM_001048111.1"/>
</dbReference>
<dbReference type="SMR" id="Q2KL21"/>
<dbReference type="FunCoup" id="Q2KL21">
    <property type="interactions" value="81"/>
</dbReference>
<dbReference type="STRING" id="9615.ENSCAFP00000025668"/>
<dbReference type="GlyCosmos" id="Q2KL21">
    <property type="glycosylation" value="2 sites, No reported glycans"/>
</dbReference>
<dbReference type="PaxDb" id="9612-ENSCAFP00000025668"/>
<dbReference type="GeneID" id="484943"/>
<dbReference type="KEGG" id="cfa:484943"/>
<dbReference type="CTD" id="2057"/>
<dbReference type="eggNOG" id="ENOG502RYHW">
    <property type="taxonomic scope" value="Eukaryota"/>
</dbReference>
<dbReference type="InParanoid" id="Q2KL21"/>
<dbReference type="OrthoDB" id="9890439at2759"/>
<dbReference type="Proteomes" id="UP000002254">
    <property type="component" value="Unplaced"/>
</dbReference>
<dbReference type="Proteomes" id="UP000694429">
    <property type="component" value="Unplaced"/>
</dbReference>
<dbReference type="Proteomes" id="UP000694542">
    <property type="component" value="Unplaced"/>
</dbReference>
<dbReference type="Proteomes" id="UP000805418">
    <property type="component" value="Unplaced"/>
</dbReference>
<dbReference type="GO" id="GO:0009897">
    <property type="term" value="C:external side of plasma membrane"/>
    <property type="evidence" value="ECO:0000318"/>
    <property type="project" value="GO_Central"/>
</dbReference>
<dbReference type="GO" id="GO:0004900">
    <property type="term" value="F:erythropoietin receptor activity"/>
    <property type="evidence" value="ECO:0000318"/>
    <property type="project" value="GO_Central"/>
</dbReference>
<dbReference type="GO" id="GO:0019221">
    <property type="term" value="P:cytokine-mediated signaling pathway"/>
    <property type="evidence" value="ECO:0000318"/>
    <property type="project" value="GO_Central"/>
</dbReference>
<dbReference type="GO" id="GO:0008284">
    <property type="term" value="P:positive regulation of cell population proliferation"/>
    <property type="evidence" value="ECO:0000318"/>
    <property type="project" value="GO_Central"/>
</dbReference>
<dbReference type="CDD" id="cd00063">
    <property type="entry name" value="FN3"/>
    <property type="match status" value="1"/>
</dbReference>
<dbReference type="FunFam" id="2.60.40.10:FF:001041">
    <property type="entry name" value="Erythropoietin receptor"/>
    <property type="match status" value="1"/>
</dbReference>
<dbReference type="Gene3D" id="2.60.40.10">
    <property type="entry name" value="Immunoglobulins"/>
    <property type="match status" value="2"/>
</dbReference>
<dbReference type="InterPro" id="IPR009167">
    <property type="entry name" value="Erythropoietin_rcpt"/>
</dbReference>
<dbReference type="InterPro" id="IPR003961">
    <property type="entry name" value="FN3_dom"/>
</dbReference>
<dbReference type="InterPro" id="IPR036116">
    <property type="entry name" value="FN3_sf"/>
</dbReference>
<dbReference type="InterPro" id="IPR015152">
    <property type="entry name" value="Growth/epo_recpt_lig-bind"/>
</dbReference>
<dbReference type="InterPro" id="IPR013783">
    <property type="entry name" value="Ig-like_fold"/>
</dbReference>
<dbReference type="InterPro" id="IPR003528">
    <property type="entry name" value="Long_hematopoietin_rcpt_CS"/>
</dbReference>
<dbReference type="PANTHER" id="PTHR23037">
    <property type="entry name" value="CYTOKINE RECEPTOR"/>
    <property type="match status" value="1"/>
</dbReference>
<dbReference type="PANTHER" id="PTHR23037:SF28">
    <property type="entry name" value="ERYTHROPOIETIN RECEPTOR"/>
    <property type="match status" value="1"/>
</dbReference>
<dbReference type="Pfam" id="PF09067">
    <property type="entry name" value="EpoR_lig-bind"/>
    <property type="match status" value="1"/>
</dbReference>
<dbReference type="Pfam" id="PF00041">
    <property type="entry name" value="fn3"/>
    <property type="match status" value="1"/>
</dbReference>
<dbReference type="PIRSF" id="PIRSF001959">
    <property type="entry name" value="EPO_receptor"/>
    <property type="match status" value="1"/>
</dbReference>
<dbReference type="SMART" id="SM00060">
    <property type="entry name" value="FN3"/>
    <property type="match status" value="1"/>
</dbReference>
<dbReference type="SUPFAM" id="SSF49265">
    <property type="entry name" value="Fibronectin type III"/>
    <property type="match status" value="2"/>
</dbReference>
<dbReference type="PROSITE" id="PS50853">
    <property type="entry name" value="FN3"/>
    <property type="match status" value="1"/>
</dbReference>
<dbReference type="PROSITE" id="PS01352">
    <property type="entry name" value="HEMATOPO_REC_L_F1"/>
    <property type="match status" value="1"/>
</dbReference>
<proteinExistence type="evidence at transcript level"/>
<evidence type="ECO:0000250" key="1">
    <source>
        <dbReference type="UniProtKB" id="P14753"/>
    </source>
</evidence>
<evidence type="ECO:0000250" key="2">
    <source>
        <dbReference type="UniProtKB" id="P16310"/>
    </source>
</evidence>
<evidence type="ECO:0000250" key="3">
    <source>
        <dbReference type="UniProtKB" id="P19235"/>
    </source>
</evidence>
<evidence type="ECO:0000255" key="4"/>
<evidence type="ECO:0000255" key="5">
    <source>
        <dbReference type="PROSITE-ProRule" id="PRU00316"/>
    </source>
</evidence>
<evidence type="ECO:0000256" key="6">
    <source>
        <dbReference type="SAM" id="MobiDB-lite"/>
    </source>
</evidence>
<evidence type="ECO:0000303" key="7">
    <source ref="1"/>
</evidence>
<evidence type="ECO:0000305" key="8"/>